<sequence length="303" mass="34473">MSEVEKTYCGFIAIVGRPNVGKSTLLNELLGQKISITSRKPQTTRHRIMGIHTEGPYQAIYVDTPGLHIEEKRAINRLMNRAASSSLGDVELVIFVVEGTHWTADDEMVVNKLRSLQCPVLLAINKVDNVTDKTKLLPHMQFLSQQMNFLDVVPISAEKGMNVDTIASIVRKHMPEAEHHFPEDYITDRSQRFMASEIIREKLMRFLGEELPYSVTVEIEQFVPNERGGYNIHGLILVEREGQKKMVIGNKGSKIKVIGTEARQDMERMFEAKVHLELWVKVKSGWADDERALRSLGYTDDLK</sequence>
<gene>
    <name evidence="1" type="primary">era</name>
    <name type="ordered locus">YpAngola_A3612</name>
</gene>
<protein>
    <recommendedName>
        <fullName evidence="1">GTPase Era</fullName>
    </recommendedName>
</protein>
<accession>A9R403</accession>
<keyword id="KW-0997">Cell inner membrane</keyword>
<keyword id="KW-1003">Cell membrane</keyword>
<keyword id="KW-0963">Cytoplasm</keyword>
<keyword id="KW-0342">GTP-binding</keyword>
<keyword id="KW-0472">Membrane</keyword>
<keyword id="KW-0547">Nucleotide-binding</keyword>
<keyword id="KW-0690">Ribosome biogenesis</keyword>
<keyword id="KW-0694">RNA-binding</keyword>
<keyword id="KW-0699">rRNA-binding</keyword>
<reference key="1">
    <citation type="journal article" date="2010" name="J. Bacteriol.">
        <title>Genome sequence of the deep-rooted Yersinia pestis strain Angola reveals new insights into the evolution and pangenome of the plague bacterium.</title>
        <authorList>
            <person name="Eppinger M."/>
            <person name="Worsham P.L."/>
            <person name="Nikolich M.P."/>
            <person name="Riley D.R."/>
            <person name="Sebastian Y."/>
            <person name="Mou S."/>
            <person name="Achtman M."/>
            <person name="Lindler L.E."/>
            <person name="Ravel J."/>
        </authorList>
    </citation>
    <scope>NUCLEOTIDE SEQUENCE [LARGE SCALE GENOMIC DNA]</scope>
    <source>
        <strain>Angola</strain>
    </source>
</reference>
<dbReference type="EMBL" id="CP000901">
    <property type="protein sequence ID" value="ABX86486.1"/>
    <property type="molecule type" value="Genomic_DNA"/>
</dbReference>
<dbReference type="RefSeq" id="WP_002214829.1">
    <property type="nucleotide sequence ID" value="NZ_CP009935.1"/>
</dbReference>
<dbReference type="SMR" id="A9R403"/>
<dbReference type="GeneID" id="96662248"/>
<dbReference type="KEGG" id="ypg:YpAngola_A3612"/>
<dbReference type="PATRIC" id="fig|349746.12.peg.312"/>
<dbReference type="GO" id="GO:0005829">
    <property type="term" value="C:cytosol"/>
    <property type="evidence" value="ECO:0007669"/>
    <property type="project" value="TreeGrafter"/>
</dbReference>
<dbReference type="GO" id="GO:0005886">
    <property type="term" value="C:plasma membrane"/>
    <property type="evidence" value="ECO:0007669"/>
    <property type="project" value="UniProtKB-SubCell"/>
</dbReference>
<dbReference type="GO" id="GO:0005525">
    <property type="term" value="F:GTP binding"/>
    <property type="evidence" value="ECO:0007669"/>
    <property type="project" value="UniProtKB-UniRule"/>
</dbReference>
<dbReference type="GO" id="GO:0003924">
    <property type="term" value="F:GTPase activity"/>
    <property type="evidence" value="ECO:0007669"/>
    <property type="project" value="UniProtKB-UniRule"/>
</dbReference>
<dbReference type="GO" id="GO:0043024">
    <property type="term" value="F:ribosomal small subunit binding"/>
    <property type="evidence" value="ECO:0007669"/>
    <property type="project" value="TreeGrafter"/>
</dbReference>
<dbReference type="GO" id="GO:0070181">
    <property type="term" value="F:small ribosomal subunit rRNA binding"/>
    <property type="evidence" value="ECO:0007669"/>
    <property type="project" value="UniProtKB-UniRule"/>
</dbReference>
<dbReference type="GO" id="GO:0000028">
    <property type="term" value="P:ribosomal small subunit assembly"/>
    <property type="evidence" value="ECO:0007669"/>
    <property type="project" value="TreeGrafter"/>
</dbReference>
<dbReference type="CDD" id="cd04163">
    <property type="entry name" value="Era"/>
    <property type="match status" value="1"/>
</dbReference>
<dbReference type="CDD" id="cd22534">
    <property type="entry name" value="KH-II_Era"/>
    <property type="match status" value="1"/>
</dbReference>
<dbReference type="FunFam" id="3.30.300.20:FF:000003">
    <property type="entry name" value="GTPase Era"/>
    <property type="match status" value="1"/>
</dbReference>
<dbReference type="FunFam" id="3.40.50.300:FF:000094">
    <property type="entry name" value="GTPase Era"/>
    <property type="match status" value="1"/>
</dbReference>
<dbReference type="Gene3D" id="3.30.300.20">
    <property type="match status" value="1"/>
</dbReference>
<dbReference type="Gene3D" id="3.40.50.300">
    <property type="entry name" value="P-loop containing nucleotide triphosphate hydrolases"/>
    <property type="match status" value="1"/>
</dbReference>
<dbReference type="HAMAP" id="MF_00367">
    <property type="entry name" value="GTPase_Era"/>
    <property type="match status" value="1"/>
</dbReference>
<dbReference type="InterPro" id="IPR030388">
    <property type="entry name" value="G_ERA_dom"/>
</dbReference>
<dbReference type="InterPro" id="IPR006073">
    <property type="entry name" value="GTP-bd"/>
</dbReference>
<dbReference type="InterPro" id="IPR005662">
    <property type="entry name" value="GTPase_Era-like"/>
</dbReference>
<dbReference type="InterPro" id="IPR015946">
    <property type="entry name" value="KH_dom-like_a/b"/>
</dbReference>
<dbReference type="InterPro" id="IPR004044">
    <property type="entry name" value="KH_dom_type_2"/>
</dbReference>
<dbReference type="InterPro" id="IPR009019">
    <property type="entry name" value="KH_sf_prok-type"/>
</dbReference>
<dbReference type="InterPro" id="IPR027417">
    <property type="entry name" value="P-loop_NTPase"/>
</dbReference>
<dbReference type="InterPro" id="IPR005225">
    <property type="entry name" value="Small_GTP-bd"/>
</dbReference>
<dbReference type="NCBIfam" id="TIGR00436">
    <property type="entry name" value="era"/>
    <property type="match status" value="1"/>
</dbReference>
<dbReference type="NCBIfam" id="NF000908">
    <property type="entry name" value="PRK00089.1"/>
    <property type="match status" value="1"/>
</dbReference>
<dbReference type="NCBIfam" id="TIGR00231">
    <property type="entry name" value="small_GTP"/>
    <property type="match status" value="1"/>
</dbReference>
<dbReference type="PANTHER" id="PTHR42698">
    <property type="entry name" value="GTPASE ERA"/>
    <property type="match status" value="1"/>
</dbReference>
<dbReference type="PANTHER" id="PTHR42698:SF1">
    <property type="entry name" value="GTPASE ERA, MITOCHONDRIAL"/>
    <property type="match status" value="1"/>
</dbReference>
<dbReference type="Pfam" id="PF07650">
    <property type="entry name" value="KH_2"/>
    <property type="match status" value="1"/>
</dbReference>
<dbReference type="Pfam" id="PF01926">
    <property type="entry name" value="MMR_HSR1"/>
    <property type="match status" value="1"/>
</dbReference>
<dbReference type="SUPFAM" id="SSF52540">
    <property type="entry name" value="P-loop containing nucleoside triphosphate hydrolases"/>
    <property type="match status" value="1"/>
</dbReference>
<dbReference type="SUPFAM" id="SSF54814">
    <property type="entry name" value="Prokaryotic type KH domain (KH-domain type II)"/>
    <property type="match status" value="1"/>
</dbReference>
<dbReference type="PROSITE" id="PS51713">
    <property type="entry name" value="G_ERA"/>
    <property type="match status" value="1"/>
</dbReference>
<dbReference type="PROSITE" id="PS50823">
    <property type="entry name" value="KH_TYPE_2"/>
    <property type="match status" value="1"/>
</dbReference>
<organism>
    <name type="scientific">Yersinia pestis bv. Antiqua (strain Angola)</name>
    <dbReference type="NCBI Taxonomy" id="349746"/>
    <lineage>
        <taxon>Bacteria</taxon>
        <taxon>Pseudomonadati</taxon>
        <taxon>Pseudomonadota</taxon>
        <taxon>Gammaproteobacteria</taxon>
        <taxon>Enterobacterales</taxon>
        <taxon>Yersiniaceae</taxon>
        <taxon>Yersinia</taxon>
    </lineage>
</organism>
<name>ERA_YERPG</name>
<evidence type="ECO:0000255" key="1">
    <source>
        <dbReference type="HAMAP-Rule" id="MF_00367"/>
    </source>
</evidence>
<evidence type="ECO:0000255" key="2">
    <source>
        <dbReference type="PROSITE-ProRule" id="PRU01050"/>
    </source>
</evidence>
<comment type="function">
    <text evidence="1">An essential GTPase that binds both GDP and GTP, with rapid nucleotide exchange. Plays a role in 16S rRNA processing and 30S ribosomal subunit biogenesis and possibly also in cell cycle regulation and energy metabolism.</text>
</comment>
<comment type="subunit">
    <text evidence="1">Monomer.</text>
</comment>
<comment type="subcellular location">
    <subcellularLocation>
        <location>Cytoplasm</location>
    </subcellularLocation>
    <subcellularLocation>
        <location evidence="1">Cell inner membrane</location>
        <topology evidence="1">Peripheral membrane protein</topology>
    </subcellularLocation>
</comment>
<comment type="similarity">
    <text evidence="1 2">Belongs to the TRAFAC class TrmE-Era-EngA-EngB-Septin-like GTPase superfamily. Era GTPase family.</text>
</comment>
<proteinExistence type="inferred from homology"/>
<feature type="chain" id="PRO_1000121372" description="GTPase Era">
    <location>
        <begin position="1"/>
        <end position="303"/>
    </location>
</feature>
<feature type="domain" description="Era-type G" evidence="2">
    <location>
        <begin position="8"/>
        <end position="176"/>
    </location>
</feature>
<feature type="domain" description="KH type-2" evidence="1">
    <location>
        <begin position="207"/>
        <end position="284"/>
    </location>
</feature>
<feature type="region of interest" description="G1" evidence="2">
    <location>
        <begin position="16"/>
        <end position="23"/>
    </location>
</feature>
<feature type="region of interest" description="G2" evidence="2">
    <location>
        <begin position="42"/>
        <end position="46"/>
    </location>
</feature>
<feature type="region of interest" description="G3" evidence="2">
    <location>
        <begin position="63"/>
        <end position="66"/>
    </location>
</feature>
<feature type="region of interest" description="G4" evidence="2">
    <location>
        <begin position="125"/>
        <end position="128"/>
    </location>
</feature>
<feature type="region of interest" description="G5" evidence="2">
    <location>
        <begin position="155"/>
        <end position="157"/>
    </location>
</feature>
<feature type="binding site" evidence="1">
    <location>
        <begin position="16"/>
        <end position="23"/>
    </location>
    <ligand>
        <name>GTP</name>
        <dbReference type="ChEBI" id="CHEBI:37565"/>
    </ligand>
</feature>
<feature type="binding site" evidence="1">
    <location>
        <begin position="63"/>
        <end position="67"/>
    </location>
    <ligand>
        <name>GTP</name>
        <dbReference type="ChEBI" id="CHEBI:37565"/>
    </ligand>
</feature>
<feature type="binding site" evidence="1">
    <location>
        <begin position="125"/>
        <end position="128"/>
    </location>
    <ligand>
        <name>GTP</name>
        <dbReference type="ChEBI" id="CHEBI:37565"/>
    </ligand>
</feature>